<feature type="chain" id="PRO_1000064855" description="UPF0283 membrane protein VIBHAR_01918">
    <location>
        <begin position="1"/>
        <end position="346"/>
    </location>
</feature>
<feature type="transmembrane region" description="Helical" evidence="1">
    <location>
        <begin position="73"/>
        <end position="93"/>
    </location>
</feature>
<feature type="transmembrane region" description="Helical" evidence="1">
    <location>
        <begin position="98"/>
        <end position="118"/>
    </location>
</feature>
<feature type="region of interest" description="Disordered" evidence="2">
    <location>
        <begin position="1"/>
        <end position="28"/>
    </location>
</feature>
<feature type="compositionally biased region" description="Basic and acidic residues" evidence="2">
    <location>
        <begin position="1"/>
        <end position="17"/>
    </location>
</feature>
<comment type="subcellular location">
    <subcellularLocation>
        <location evidence="1">Cell inner membrane</location>
        <topology evidence="1">Multi-pass membrane protein</topology>
    </subcellularLocation>
</comment>
<comment type="similarity">
    <text evidence="1">Belongs to the UPF0283 family.</text>
</comment>
<organism>
    <name type="scientific">Vibrio campbellii (strain ATCC BAA-1116)</name>
    <dbReference type="NCBI Taxonomy" id="2902295"/>
    <lineage>
        <taxon>Bacteria</taxon>
        <taxon>Pseudomonadati</taxon>
        <taxon>Pseudomonadota</taxon>
        <taxon>Gammaproteobacteria</taxon>
        <taxon>Vibrionales</taxon>
        <taxon>Vibrionaceae</taxon>
        <taxon>Vibrio</taxon>
    </lineage>
</organism>
<evidence type="ECO:0000255" key="1">
    <source>
        <dbReference type="HAMAP-Rule" id="MF_01085"/>
    </source>
</evidence>
<evidence type="ECO:0000256" key="2">
    <source>
        <dbReference type="SAM" id="MobiDB-lite"/>
    </source>
</evidence>
<accession>A7MYQ5</accession>
<gene>
    <name type="ordered locus">VIBHAR_01918</name>
</gene>
<sequence length="346" mass="38070">MSELKQKQVFKEKVMHSEEEDVSPELNTQKTFSEKETFIPVEIEEQQKETEQELQLEQVIRPKSGRKWLTTGLFATFAGLVVWQAVDSVITAIQTADWLALGWVGFITTIASFGLGALGKELWKLRKLRNHFSVQEESEALIDSQSVGKGKAFCEKVAEQSGVLAENPGFDRWKNSVNPAHSDAEILEMYDSMVVSQQDKLATKIVSQHATESAALVAVSPLAAADMLLVAWRNFKMIDNLSKVYGVELGYASRIKLLRSVFVNMAAAGASELAIDASMDLMSMDLAGKISARAGQGLGVGILTARLGLKSMALLRPLPWYPERQVKLGAIRKEVVAKVASITMKP</sequence>
<keyword id="KW-0997">Cell inner membrane</keyword>
<keyword id="KW-1003">Cell membrane</keyword>
<keyword id="KW-0472">Membrane</keyword>
<keyword id="KW-0812">Transmembrane</keyword>
<keyword id="KW-1133">Transmembrane helix</keyword>
<reference key="1">
    <citation type="submission" date="2007-08" db="EMBL/GenBank/DDBJ databases">
        <authorList>
            <consortium name="The Vibrio harveyi Genome Sequencing Project"/>
            <person name="Bassler B."/>
            <person name="Clifton S.W."/>
            <person name="Fulton L."/>
            <person name="Delehaunty K."/>
            <person name="Fronick C."/>
            <person name="Harrison M."/>
            <person name="Markivic C."/>
            <person name="Fulton R."/>
            <person name="Tin-Wollam A.-M."/>
            <person name="Shah N."/>
            <person name="Pepin K."/>
            <person name="Nash W."/>
            <person name="Thiruvilangam P."/>
            <person name="Bhonagiri V."/>
            <person name="Waters C."/>
            <person name="Tu K.C."/>
            <person name="Irgon J."/>
            <person name="Wilson R.K."/>
        </authorList>
    </citation>
    <scope>NUCLEOTIDE SEQUENCE [LARGE SCALE GENOMIC DNA]</scope>
    <source>
        <strain>ATCC BAA-1116 / BB120</strain>
    </source>
</reference>
<protein>
    <recommendedName>
        <fullName evidence="1">UPF0283 membrane protein VIBHAR_01918</fullName>
    </recommendedName>
</protein>
<name>Y1918_VIBC1</name>
<proteinExistence type="inferred from homology"/>
<dbReference type="EMBL" id="CP000789">
    <property type="protein sequence ID" value="ABU70883.1"/>
    <property type="molecule type" value="Genomic_DNA"/>
</dbReference>
<dbReference type="RefSeq" id="WP_012127685.1">
    <property type="nucleotide sequence ID" value="NC_009783.1"/>
</dbReference>
<dbReference type="KEGG" id="vha:VIBHAR_01918"/>
<dbReference type="PATRIC" id="fig|338187.25.peg.758"/>
<dbReference type="Proteomes" id="UP000008152">
    <property type="component" value="Chromosome I"/>
</dbReference>
<dbReference type="GO" id="GO:0005886">
    <property type="term" value="C:plasma membrane"/>
    <property type="evidence" value="ECO:0007669"/>
    <property type="project" value="UniProtKB-SubCell"/>
</dbReference>
<dbReference type="HAMAP" id="MF_01085">
    <property type="entry name" value="UPF0283"/>
    <property type="match status" value="1"/>
</dbReference>
<dbReference type="InterPro" id="IPR021147">
    <property type="entry name" value="DUF697"/>
</dbReference>
<dbReference type="InterPro" id="IPR006507">
    <property type="entry name" value="UPF0283"/>
</dbReference>
<dbReference type="NCBIfam" id="TIGR01620">
    <property type="entry name" value="hyp_HI0043"/>
    <property type="match status" value="1"/>
</dbReference>
<dbReference type="PANTHER" id="PTHR39342">
    <property type="entry name" value="UPF0283 MEMBRANE PROTEIN YCJF"/>
    <property type="match status" value="1"/>
</dbReference>
<dbReference type="PANTHER" id="PTHR39342:SF1">
    <property type="entry name" value="UPF0283 MEMBRANE PROTEIN YCJF"/>
    <property type="match status" value="1"/>
</dbReference>
<dbReference type="Pfam" id="PF05128">
    <property type="entry name" value="DUF697"/>
    <property type="match status" value="1"/>
</dbReference>